<proteinExistence type="inferred from homology"/>
<organism>
    <name type="scientific">Campylobacter lari (strain RM2100 / D67 / ATCC BAA-1060)</name>
    <dbReference type="NCBI Taxonomy" id="306263"/>
    <lineage>
        <taxon>Bacteria</taxon>
        <taxon>Pseudomonadati</taxon>
        <taxon>Campylobacterota</taxon>
        <taxon>Epsilonproteobacteria</taxon>
        <taxon>Campylobacterales</taxon>
        <taxon>Campylobacteraceae</taxon>
        <taxon>Campylobacter</taxon>
    </lineage>
</organism>
<name>FLIW_CAMLR</name>
<comment type="function">
    <text evidence="1">Acts as an anti-CsrA protein, binds CsrA and prevents it from repressing translation of its target genes, one of which is flagellin. Binds to flagellin and participates in the assembly of the flagellum.</text>
</comment>
<comment type="subunit">
    <text evidence="1">Interacts with translational regulator CsrA and flagellin(s).</text>
</comment>
<comment type="subcellular location">
    <subcellularLocation>
        <location evidence="1">Cytoplasm</location>
    </subcellularLocation>
</comment>
<comment type="similarity">
    <text evidence="1">Belongs to the FliW family.</text>
</comment>
<feature type="chain" id="PRO_1000164463" description="Flagellar assembly factor FliW">
    <location>
        <begin position="1"/>
        <end position="131"/>
    </location>
</feature>
<keyword id="KW-1005">Bacterial flagellum biogenesis</keyword>
<keyword id="KW-0143">Chaperone</keyword>
<keyword id="KW-0963">Cytoplasm</keyword>
<keyword id="KW-1185">Reference proteome</keyword>
<keyword id="KW-0810">Translation regulation</keyword>
<sequence>MNLEVKCPILGFEDTKNMNFYKIDEVFYRLKSLDGKDFSFVMIDPYMIRPDYDFEVPDYYQELLALNEQTNFGVFVIVAINEPLEESTVNFLAPVVMNYDNNSLVQVILDTSKYPNYFQSEKISAFIKQTK</sequence>
<accession>B9KCJ4</accession>
<dbReference type="EMBL" id="CP000932">
    <property type="protein sequence ID" value="ACM64283.1"/>
    <property type="molecule type" value="Genomic_DNA"/>
</dbReference>
<dbReference type="RefSeq" id="WP_012661666.1">
    <property type="nucleotide sequence ID" value="NC_012039.1"/>
</dbReference>
<dbReference type="SMR" id="B9KCJ4"/>
<dbReference type="STRING" id="306263.Cla_0959"/>
<dbReference type="GeneID" id="93004999"/>
<dbReference type="KEGG" id="cla:CLA_0959"/>
<dbReference type="eggNOG" id="COG1699">
    <property type="taxonomic scope" value="Bacteria"/>
</dbReference>
<dbReference type="HOGENOM" id="CLU_112356_2_0_7"/>
<dbReference type="Proteomes" id="UP000007727">
    <property type="component" value="Chromosome"/>
</dbReference>
<dbReference type="GO" id="GO:0005737">
    <property type="term" value="C:cytoplasm"/>
    <property type="evidence" value="ECO:0007669"/>
    <property type="project" value="UniProtKB-SubCell"/>
</dbReference>
<dbReference type="GO" id="GO:0044780">
    <property type="term" value="P:bacterial-type flagellum assembly"/>
    <property type="evidence" value="ECO:0007669"/>
    <property type="project" value="UniProtKB-UniRule"/>
</dbReference>
<dbReference type="GO" id="GO:0006417">
    <property type="term" value="P:regulation of translation"/>
    <property type="evidence" value="ECO:0007669"/>
    <property type="project" value="UniProtKB-KW"/>
</dbReference>
<dbReference type="Gene3D" id="2.30.290.10">
    <property type="entry name" value="BH3618-like"/>
    <property type="match status" value="1"/>
</dbReference>
<dbReference type="HAMAP" id="MF_01185">
    <property type="entry name" value="FliW"/>
    <property type="match status" value="1"/>
</dbReference>
<dbReference type="InterPro" id="IPR003775">
    <property type="entry name" value="Flagellar_assembly_factor_FliW"/>
</dbReference>
<dbReference type="InterPro" id="IPR024046">
    <property type="entry name" value="Flagellar_assmbl_FliW_dom_sf"/>
</dbReference>
<dbReference type="NCBIfam" id="NF009790">
    <property type="entry name" value="PRK13282.1"/>
    <property type="match status" value="1"/>
</dbReference>
<dbReference type="PANTHER" id="PTHR39190">
    <property type="entry name" value="FLAGELLAR ASSEMBLY FACTOR FLIW"/>
    <property type="match status" value="1"/>
</dbReference>
<dbReference type="PANTHER" id="PTHR39190:SF1">
    <property type="entry name" value="FLAGELLAR ASSEMBLY FACTOR FLIW"/>
    <property type="match status" value="1"/>
</dbReference>
<dbReference type="Pfam" id="PF02623">
    <property type="entry name" value="FliW"/>
    <property type="match status" value="1"/>
</dbReference>
<dbReference type="SUPFAM" id="SSF141457">
    <property type="entry name" value="BH3618-like"/>
    <property type="match status" value="1"/>
</dbReference>
<reference key="1">
    <citation type="journal article" date="2008" name="Foodborne Pathog. Dis.">
        <title>The complete genome sequence and analysis of the human pathogen Campylobacter lari.</title>
        <authorList>
            <person name="Miller W.G."/>
            <person name="Wang G."/>
            <person name="Binnewies T.T."/>
            <person name="Parker C.T."/>
        </authorList>
    </citation>
    <scope>NUCLEOTIDE SEQUENCE [LARGE SCALE GENOMIC DNA]</scope>
    <source>
        <strain>RM2100 / D67 / ATCC BAA-1060</strain>
    </source>
</reference>
<evidence type="ECO:0000255" key="1">
    <source>
        <dbReference type="HAMAP-Rule" id="MF_01185"/>
    </source>
</evidence>
<gene>
    <name evidence="1" type="primary">fliW</name>
    <name type="ordered locus">Cla_0959</name>
</gene>
<protein>
    <recommendedName>
        <fullName evidence="1">Flagellar assembly factor FliW</fullName>
    </recommendedName>
</protein>